<evidence type="ECO:0000250" key="1"/>
<evidence type="ECO:0000255" key="2"/>
<evidence type="ECO:0000255" key="3">
    <source>
        <dbReference type="PROSITE-ProRule" id="PRU00274"/>
    </source>
</evidence>
<evidence type="ECO:0000305" key="4"/>
<sequence length="316" mass="35251">MAASLSRLSAGLAASRPLGLSRSFLLLVLLLLNSGYKGDSTKPACGQPWWPKNLDLSRHWPWEVSLRVGNEHVCGGALIDLKWVVTAAHCIQGTKEYSVILGTSKLKPPNSTRTLLIPVRDIIMHPKYWGRTFIMGDVALLQLYNPVIISKYVQPICLPEPNYSLKVGTKCWVTGWGQVKQRFSANSTLASELQEAEVFIMDNKKCDQIYRKKSHIPRVVPLVLGDMICATNYREDLCSGDSGGPLACEVEGRWILAGVLSWEKACAKVRNPGVYTRITKYSRWIKKQISNGILSVPCTSAWLLLLFWLLQPQMGP</sequence>
<proteinExistence type="evidence at transcript level"/>
<keyword id="KW-1015">Disulfide bond</keyword>
<keyword id="KW-0325">Glycoprotein</keyword>
<keyword id="KW-0378">Hydrolase</keyword>
<keyword id="KW-0645">Protease</keyword>
<keyword id="KW-1185">Reference proteome</keyword>
<keyword id="KW-0964">Secreted</keyword>
<keyword id="KW-0720">Serine protease</keyword>
<keyword id="KW-0732">Signal</keyword>
<reference key="1">
    <citation type="submission" date="2007-02" db="EMBL/GenBank/DDBJ databases">
        <authorList>
            <consortium name="NIH - Mammalian Gene Collection (MGC) project"/>
        </authorList>
    </citation>
    <scope>NUCLEOTIDE SEQUENCE [LARGE SCALE MRNA]</scope>
    <source>
        <strain>Crossbred X Angus</strain>
        <tissue>Liver</tissue>
    </source>
</reference>
<feature type="signal peptide" evidence="2">
    <location>
        <begin position="1"/>
        <end position="38"/>
    </location>
</feature>
<feature type="chain" id="PRO_0000349306" description="Serine protease 45">
    <location>
        <begin position="39"/>
        <end position="316"/>
    </location>
</feature>
<feature type="domain" description="Peptidase S1" evidence="3">
    <location>
        <begin position="49"/>
        <end position="290"/>
    </location>
</feature>
<feature type="active site" description="Charge relay system" evidence="1">
    <location>
        <position position="89"/>
    </location>
</feature>
<feature type="active site" description="Charge relay system" evidence="1">
    <location>
        <position position="137"/>
    </location>
</feature>
<feature type="active site" description="Charge relay system" evidence="1">
    <location>
        <position position="242"/>
    </location>
</feature>
<feature type="glycosylation site" description="N-linked (GlcNAc...) asparagine" evidence="2">
    <location>
        <position position="110"/>
    </location>
</feature>
<feature type="glycosylation site" description="N-linked (GlcNAc...) asparagine" evidence="2">
    <location>
        <position position="162"/>
    </location>
</feature>
<feature type="glycosylation site" description="N-linked (GlcNAc...) asparagine" evidence="2">
    <location>
        <position position="186"/>
    </location>
</feature>
<feature type="disulfide bond" evidence="3">
    <location>
        <begin position="74"/>
        <end position="90"/>
    </location>
</feature>
<feature type="disulfide bond" evidence="3">
    <location>
        <begin position="171"/>
        <end position="248"/>
    </location>
</feature>
<feature type="disulfide bond" evidence="3">
    <location>
        <begin position="206"/>
        <end position="229"/>
    </location>
</feature>
<feature type="disulfide bond" evidence="3">
    <location>
        <begin position="238"/>
        <end position="266"/>
    </location>
</feature>
<gene>
    <name type="primary">PRSS45</name>
    <name type="synonym">TESSP5</name>
</gene>
<dbReference type="EC" id="3.4.21.-"/>
<dbReference type="EMBL" id="BC133553">
    <property type="protein sequence ID" value="AAI33554.1"/>
    <property type="molecule type" value="mRNA"/>
</dbReference>
<dbReference type="RefSeq" id="NP_001075924.1">
    <property type="nucleotide sequence ID" value="NM_001082455.2"/>
</dbReference>
<dbReference type="SMR" id="A2VE36"/>
<dbReference type="FunCoup" id="A2VE36">
    <property type="interactions" value="21"/>
</dbReference>
<dbReference type="STRING" id="9913.ENSBTAP00000005550"/>
<dbReference type="MEROPS" id="S01.326"/>
<dbReference type="GlyCosmos" id="A2VE36">
    <property type="glycosylation" value="3 sites, No reported glycans"/>
</dbReference>
<dbReference type="GlyGen" id="A2VE36">
    <property type="glycosylation" value="3 sites"/>
</dbReference>
<dbReference type="PaxDb" id="9913-ENSBTAP00000005550"/>
<dbReference type="GeneID" id="540798"/>
<dbReference type="KEGG" id="bta:540798"/>
<dbReference type="CTD" id="260408"/>
<dbReference type="eggNOG" id="KOG3627">
    <property type="taxonomic scope" value="Eukaryota"/>
</dbReference>
<dbReference type="InParanoid" id="A2VE36"/>
<dbReference type="OrthoDB" id="546450at2759"/>
<dbReference type="Proteomes" id="UP000009136">
    <property type="component" value="Unplaced"/>
</dbReference>
<dbReference type="GO" id="GO:0005615">
    <property type="term" value="C:extracellular space"/>
    <property type="evidence" value="ECO:0000318"/>
    <property type="project" value="GO_Central"/>
</dbReference>
<dbReference type="GO" id="GO:0004252">
    <property type="term" value="F:serine-type endopeptidase activity"/>
    <property type="evidence" value="ECO:0000318"/>
    <property type="project" value="GO_Central"/>
</dbReference>
<dbReference type="GO" id="GO:0006508">
    <property type="term" value="P:proteolysis"/>
    <property type="evidence" value="ECO:0000318"/>
    <property type="project" value="GO_Central"/>
</dbReference>
<dbReference type="CDD" id="cd00190">
    <property type="entry name" value="Tryp_SPc"/>
    <property type="match status" value="1"/>
</dbReference>
<dbReference type="FunFam" id="2.40.10.10:FF:000122">
    <property type="entry name" value="Chymotrypsin-like elastase family member 1"/>
    <property type="match status" value="1"/>
</dbReference>
<dbReference type="FunFam" id="2.40.10.10:FF:000105">
    <property type="entry name" value="Inactive serine protease 45"/>
    <property type="match status" value="1"/>
</dbReference>
<dbReference type="Gene3D" id="2.40.10.10">
    <property type="entry name" value="Trypsin-like serine proteases"/>
    <property type="match status" value="2"/>
</dbReference>
<dbReference type="InterPro" id="IPR009003">
    <property type="entry name" value="Peptidase_S1_PA"/>
</dbReference>
<dbReference type="InterPro" id="IPR043504">
    <property type="entry name" value="Peptidase_S1_PA_chymotrypsin"/>
</dbReference>
<dbReference type="InterPro" id="IPR001314">
    <property type="entry name" value="Peptidase_S1A"/>
</dbReference>
<dbReference type="InterPro" id="IPR051487">
    <property type="entry name" value="Ser/Thr_Proteases_Immune/Dev"/>
</dbReference>
<dbReference type="InterPro" id="IPR001254">
    <property type="entry name" value="Trypsin_dom"/>
</dbReference>
<dbReference type="InterPro" id="IPR018114">
    <property type="entry name" value="TRYPSIN_HIS"/>
</dbReference>
<dbReference type="PANTHER" id="PTHR24256">
    <property type="entry name" value="TRYPTASE-RELATED"/>
    <property type="match status" value="1"/>
</dbReference>
<dbReference type="Pfam" id="PF00089">
    <property type="entry name" value="Trypsin"/>
    <property type="match status" value="1"/>
</dbReference>
<dbReference type="PRINTS" id="PR00722">
    <property type="entry name" value="CHYMOTRYPSIN"/>
</dbReference>
<dbReference type="SMART" id="SM00020">
    <property type="entry name" value="Tryp_SPc"/>
    <property type="match status" value="1"/>
</dbReference>
<dbReference type="SUPFAM" id="SSF50494">
    <property type="entry name" value="Trypsin-like serine proteases"/>
    <property type="match status" value="1"/>
</dbReference>
<dbReference type="PROSITE" id="PS50240">
    <property type="entry name" value="TRYPSIN_DOM"/>
    <property type="match status" value="1"/>
</dbReference>
<dbReference type="PROSITE" id="PS00134">
    <property type="entry name" value="TRYPSIN_HIS"/>
    <property type="match status" value="1"/>
</dbReference>
<name>PRS45_BOVIN</name>
<organism>
    <name type="scientific">Bos taurus</name>
    <name type="common">Bovine</name>
    <dbReference type="NCBI Taxonomy" id="9913"/>
    <lineage>
        <taxon>Eukaryota</taxon>
        <taxon>Metazoa</taxon>
        <taxon>Chordata</taxon>
        <taxon>Craniata</taxon>
        <taxon>Vertebrata</taxon>
        <taxon>Euteleostomi</taxon>
        <taxon>Mammalia</taxon>
        <taxon>Eutheria</taxon>
        <taxon>Laurasiatheria</taxon>
        <taxon>Artiodactyla</taxon>
        <taxon>Ruminantia</taxon>
        <taxon>Pecora</taxon>
        <taxon>Bovidae</taxon>
        <taxon>Bovinae</taxon>
        <taxon>Bos</taxon>
    </lineage>
</organism>
<accession>A2VE36</accession>
<comment type="subcellular location">
    <subcellularLocation>
        <location evidence="4">Secreted</location>
    </subcellularLocation>
</comment>
<comment type="similarity">
    <text evidence="3">Belongs to the peptidase S1 family.</text>
</comment>
<protein>
    <recommendedName>
        <fullName>Serine protease 45</fullName>
        <ecNumber>3.4.21.-</ecNumber>
    </recommendedName>
    <alternativeName>
        <fullName>Testis serine protease 5</fullName>
    </alternativeName>
</protein>